<dbReference type="EMBL" id="CR931997">
    <property type="protein sequence ID" value="CAI37969.1"/>
    <property type="molecule type" value="Genomic_DNA"/>
</dbReference>
<dbReference type="RefSeq" id="WP_011274132.1">
    <property type="nucleotide sequence ID" value="NC_007164.1"/>
</dbReference>
<dbReference type="SMR" id="Q4JT88"/>
<dbReference type="STRING" id="306537.jk1792"/>
<dbReference type="KEGG" id="cjk:jk1792"/>
<dbReference type="PATRIC" id="fig|306537.10.peg.1817"/>
<dbReference type="eggNOG" id="COG0200">
    <property type="taxonomic scope" value="Bacteria"/>
</dbReference>
<dbReference type="HOGENOM" id="CLU_055188_4_1_11"/>
<dbReference type="OrthoDB" id="9810293at2"/>
<dbReference type="Proteomes" id="UP000000545">
    <property type="component" value="Chromosome"/>
</dbReference>
<dbReference type="GO" id="GO:0022625">
    <property type="term" value="C:cytosolic large ribosomal subunit"/>
    <property type="evidence" value="ECO:0007669"/>
    <property type="project" value="TreeGrafter"/>
</dbReference>
<dbReference type="GO" id="GO:0019843">
    <property type="term" value="F:rRNA binding"/>
    <property type="evidence" value="ECO:0007669"/>
    <property type="project" value="UniProtKB-UniRule"/>
</dbReference>
<dbReference type="GO" id="GO:0003735">
    <property type="term" value="F:structural constituent of ribosome"/>
    <property type="evidence" value="ECO:0007669"/>
    <property type="project" value="InterPro"/>
</dbReference>
<dbReference type="GO" id="GO:0006412">
    <property type="term" value="P:translation"/>
    <property type="evidence" value="ECO:0007669"/>
    <property type="project" value="UniProtKB-UniRule"/>
</dbReference>
<dbReference type="FunFam" id="3.100.10.10:FF:000005">
    <property type="entry name" value="50S ribosomal protein L15"/>
    <property type="match status" value="1"/>
</dbReference>
<dbReference type="Gene3D" id="3.100.10.10">
    <property type="match status" value="1"/>
</dbReference>
<dbReference type="HAMAP" id="MF_01341">
    <property type="entry name" value="Ribosomal_uL15"/>
    <property type="match status" value="1"/>
</dbReference>
<dbReference type="InterPro" id="IPR030878">
    <property type="entry name" value="Ribosomal_uL15"/>
</dbReference>
<dbReference type="InterPro" id="IPR021131">
    <property type="entry name" value="Ribosomal_uL15/eL18"/>
</dbReference>
<dbReference type="InterPro" id="IPR036227">
    <property type="entry name" value="Ribosomal_uL15/eL18_sf"/>
</dbReference>
<dbReference type="InterPro" id="IPR005749">
    <property type="entry name" value="Ribosomal_uL15_bac-type"/>
</dbReference>
<dbReference type="InterPro" id="IPR001196">
    <property type="entry name" value="Ribosomal_uL15_CS"/>
</dbReference>
<dbReference type="NCBIfam" id="TIGR01071">
    <property type="entry name" value="rplO_bact"/>
    <property type="match status" value="1"/>
</dbReference>
<dbReference type="PANTHER" id="PTHR12934">
    <property type="entry name" value="50S RIBOSOMAL PROTEIN L15"/>
    <property type="match status" value="1"/>
</dbReference>
<dbReference type="PANTHER" id="PTHR12934:SF11">
    <property type="entry name" value="LARGE RIBOSOMAL SUBUNIT PROTEIN UL15M"/>
    <property type="match status" value="1"/>
</dbReference>
<dbReference type="Pfam" id="PF00828">
    <property type="entry name" value="Ribosomal_L27A"/>
    <property type="match status" value="1"/>
</dbReference>
<dbReference type="SUPFAM" id="SSF52080">
    <property type="entry name" value="Ribosomal proteins L15p and L18e"/>
    <property type="match status" value="1"/>
</dbReference>
<dbReference type="PROSITE" id="PS00475">
    <property type="entry name" value="RIBOSOMAL_L15"/>
    <property type="match status" value="1"/>
</dbReference>
<proteinExistence type="inferred from homology"/>
<name>RL15_CORJK</name>
<sequence length="149" mass="15535">MSDPIKLHDLRPAPGAKKAKTRVGRGEASKGKTAGRGTKGTKARKQVSAAFEGGQMPLHMRLPKLKGFKNPAKVTYQVVNVSDLEKAFSNGGDVTVADIVAAGLARKNQPVKVLGNGEISVKLNVTANKFSGSAKQKIEAAGGTVTEAK</sequence>
<feature type="chain" id="PRO_0000104711" description="Large ribosomal subunit protein uL15">
    <location>
        <begin position="1"/>
        <end position="149"/>
    </location>
</feature>
<feature type="region of interest" description="Disordered" evidence="2">
    <location>
        <begin position="1"/>
        <end position="44"/>
    </location>
</feature>
<feature type="compositionally biased region" description="Basic and acidic residues" evidence="2">
    <location>
        <begin position="1"/>
        <end position="11"/>
    </location>
</feature>
<accession>Q4JT88</accession>
<reference key="1">
    <citation type="journal article" date="2005" name="J. Bacteriol.">
        <title>Complete genome sequence and analysis of the multiresistant nosocomial pathogen Corynebacterium jeikeium K411, a lipid-requiring bacterium of the human skin flora.</title>
        <authorList>
            <person name="Tauch A."/>
            <person name="Kaiser O."/>
            <person name="Hain T."/>
            <person name="Goesmann A."/>
            <person name="Weisshaar B."/>
            <person name="Albersmeier A."/>
            <person name="Bekel T."/>
            <person name="Bischoff N."/>
            <person name="Brune I."/>
            <person name="Chakraborty T."/>
            <person name="Kalinowski J."/>
            <person name="Meyer F."/>
            <person name="Rupp O."/>
            <person name="Schneiker S."/>
            <person name="Viehoever P."/>
            <person name="Puehler A."/>
        </authorList>
    </citation>
    <scope>NUCLEOTIDE SEQUENCE [LARGE SCALE GENOMIC DNA]</scope>
    <source>
        <strain>K411</strain>
    </source>
</reference>
<evidence type="ECO:0000255" key="1">
    <source>
        <dbReference type="HAMAP-Rule" id="MF_01341"/>
    </source>
</evidence>
<evidence type="ECO:0000256" key="2">
    <source>
        <dbReference type="SAM" id="MobiDB-lite"/>
    </source>
</evidence>
<evidence type="ECO:0000305" key="3"/>
<comment type="function">
    <text evidence="1">Binds to the 23S rRNA.</text>
</comment>
<comment type="subunit">
    <text evidence="1">Part of the 50S ribosomal subunit.</text>
</comment>
<comment type="similarity">
    <text evidence="1">Belongs to the universal ribosomal protein uL15 family.</text>
</comment>
<gene>
    <name evidence="1" type="primary">rplO</name>
    <name type="ordered locus">jk1792</name>
</gene>
<protein>
    <recommendedName>
        <fullName evidence="1">Large ribosomal subunit protein uL15</fullName>
    </recommendedName>
    <alternativeName>
        <fullName evidence="3">50S ribosomal protein L15</fullName>
    </alternativeName>
</protein>
<organism>
    <name type="scientific">Corynebacterium jeikeium (strain K411)</name>
    <dbReference type="NCBI Taxonomy" id="306537"/>
    <lineage>
        <taxon>Bacteria</taxon>
        <taxon>Bacillati</taxon>
        <taxon>Actinomycetota</taxon>
        <taxon>Actinomycetes</taxon>
        <taxon>Mycobacteriales</taxon>
        <taxon>Corynebacteriaceae</taxon>
        <taxon>Corynebacterium</taxon>
    </lineage>
</organism>
<keyword id="KW-1185">Reference proteome</keyword>
<keyword id="KW-0687">Ribonucleoprotein</keyword>
<keyword id="KW-0689">Ribosomal protein</keyword>
<keyword id="KW-0694">RNA-binding</keyword>
<keyword id="KW-0699">rRNA-binding</keyword>